<name>PGK_CAEEL</name>
<keyword id="KW-0067">ATP-binding</keyword>
<keyword id="KW-0963">Cytoplasm</keyword>
<keyword id="KW-0324">Glycolysis</keyword>
<keyword id="KW-0418">Kinase</keyword>
<keyword id="KW-0460">Magnesium</keyword>
<keyword id="KW-0479">Metal-binding</keyword>
<keyword id="KW-0547">Nucleotide-binding</keyword>
<keyword id="KW-1185">Reference proteome</keyword>
<keyword id="KW-0808">Transferase</keyword>
<gene>
    <name type="primary">pgk-1</name>
    <name type="ORF">T03F1.3</name>
</gene>
<feature type="chain" id="PRO_0000145844" description="Probable phosphoglycerate kinase">
    <location>
        <begin position="1"/>
        <end position="417"/>
    </location>
</feature>
<feature type="binding site" evidence="1">
    <location>
        <position position="23"/>
    </location>
    <ligand>
        <name>(2R)-3-phosphoglycerate</name>
        <dbReference type="ChEBI" id="CHEBI:58272"/>
    </ligand>
</feature>
<feature type="binding site" evidence="2">
    <location>
        <position position="24"/>
    </location>
    <ligand>
        <name>(2R)-3-phosphoglycerate</name>
        <dbReference type="ChEBI" id="CHEBI:58272"/>
    </ligand>
</feature>
<feature type="binding site" evidence="1">
    <location>
        <position position="25"/>
    </location>
    <ligand>
        <name>(2R)-3-phosphoglycerate</name>
        <dbReference type="ChEBI" id="CHEBI:58272"/>
    </ligand>
</feature>
<feature type="binding site" evidence="2">
    <location>
        <position position="26"/>
    </location>
    <ligand>
        <name>(2R)-3-phosphoglycerate</name>
        <dbReference type="ChEBI" id="CHEBI:58272"/>
    </ligand>
</feature>
<feature type="binding site" evidence="1">
    <location>
        <position position="38"/>
    </location>
    <ligand>
        <name>(2R)-3-phosphoglycerate</name>
        <dbReference type="ChEBI" id="CHEBI:58272"/>
    </ligand>
</feature>
<feature type="binding site" evidence="2">
    <location>
        <position position="39"/>
    </location>
    <ligand>
        <name>(2R)-3-phosphoglycerate</name>
        <dbReference type="ChEBI" id="CHEBI:58272"/>
    </ligand>
</feature>
<feature type="binding site" evidence="1">
    <location>
        <position position="62"/>
    </location>
    <ligand>
        <name>(2R)-3-phosphoglycerate</name>
        <dbReference type="ChEBI" id="CHEBI:58272"/>
    </ligand>
</feature>
<feature type="binding site" evidence="2">
    <location>
        <position position="63"/>
    </location>
    <ligand>
        <name>(2R)-3-phosphoglycerate</name>
        <dbReference type="ChEBI" id="CHEBI:58272"/>
    </ligand>
</feature>
<feature type="binding site" evidence="1">
    <location>
        <position position="65"/>
    </location>
    <ligand>
        <name>(2R)-3-phosphoglycerate</name>
        <dbReference type="ChEBI" id="CHEBI:58272"/>
    </ligand>
</feature>
<feature type="binding site" evidence="2">
    <location>
        <position position="66"/>
    </location>
    <ligand>
        <name>(2R)-3-phosphoglycerate</name>
        <dbReference type="ChEBI" id="CHEBI:58272"/>
    </ligand>
</feature>
<feature type="binding site" evidence="1">
    <location>
        <position position="121"/>
    </location>
    <ligand>
        <name>(2R)-3-phosphoglycerate</name>
        <dbReference type="ChEBI" id="CHEBI:58272"/>
    </ligand>
</feature>
<feature type="binding site" evidence="2">
    <location>
        <position position="122"/>
    </location>
    <ligand>
        <name>(2R)-3-phosphoglycerate</name>
        <dbReference type="ChEBI" id="CHEBI:58272"/>
    </ligand>
</feature>
<feature type="binding site" evidence="1">
    <location>
        <position position="169"/>
    </location>
    <ligand>
        <name>(2R)-3-phosphoglycerate</name>
        <dbReference type="ChEBI" id="CHEBI:58272"/>
    </ligand>
</feature>
<feature type="binding site" evidence="2">
    <location>
        <position position="170"/>
    </location>
    <ligand>
        <name>(2R)-3-phosphoglycerate</name>
        <dbReference type="ChEBI" id="CHEBI:58272"/>
    </ligand>
</feature>
<feature type="binding site" evidence="1">
    <location>
        <position position="213"/>
    </location>
    <ligand>
        <name>ADP</name>
        <dbReference type="ChEBI" id="CHEBI:456216"/>
    </ligand>
</feature>
<feature type="binding site" evidence="1">
    <location>
        <position position="213"/>
    </location>
    <ligand>
        <name>CDP</name>
        <dbReference type="ChEBI" id="CHEBI:58069"/>
    </ligand>
</feature>
<feature type="binding site" evidence="2">
    <location>
        <position position="214"/>
    </location>
    <ligand>
        <name>AMP</name>
        <dbReference type="ChEBI" id="CHEBI:456215"/>
    </ligand>
</feature>
<feature type="binding site" evidence="2">
    <location>
        <position position="214"/>
    </location>
    <ligand>
        <name>ATP</name>
        <dbReference type="ChEBI" id="CHEBI:30616"/>
    </ligand>
</feature>
<feature type="binding site" evidence="1">
    <location>
        <position position="214"/>
    </location>
    <ligand>
        <name>Mg(2+)</name>
        <dbReference type="ChEBI" id="CHEBI:18420"/>
    </ligand>
</feature>
<feature type="binding site" evidence="2">
    <location>
        <position position="215"/>
    </location>
    <ligand>
        <name>AMP</name>
        <dbReference type="ChEBI" id="CHEBI:456215"/>
    </ligand>
</feature>
<feature type="binding site" evidence="1">
    <location>
        <position position="217"/>
    </location>
    <ligand>
        <name>Mg(2+)</name>
        <dbReference type="ChEBI" id="CHEBI:18420"/>
    </ligand>
</feature>
<feature type="binding site" evidence="1">
    <location>
        <position position="218"/>
    </location>
    <ligand>
        <name>CDP</name>
        <dbReference type="ChEBI" id="CHEBI:58069"/>
    </ligand>
</feature>
<feature type="binding site" evidence="1">
    <location>
        <position position="218"/>
    </location>
    <ligand>
        <name>Mg(2+)</name>
        <dbReference type="ChEBI" id="CHEBI:18420"/>
    </ligand>
</feature>
<feature type="binding site" evidence="2">
    <location>
        <position position="219"/>
    </location>
    <ligand>
        <name>AMP</name>
        <dbReference type="ChEBI" id="CHEBI:456215"/>
    </ligand>
</feature>
<feature type="binding site" evidence="2">
    <location>
        <position position="219"/>
    </location>
    <ligand>
        <name>ATP</name>
        <dbReference type="ChEBI" id="CHEBI:30616"/>
    </ligand>
</feature>
<feature type="binding site" evidence="1">
    <location>
        <position position="237"/>
    </location>
    <ligand>
        <name>ADP</name>
        <dbReference type="ChEBI" id="CHEBI:456216"/>
    </ligand>
</feature>
<feature type="binding site" evidence="1">
    <location>
        <position position="237"/>
    </location>
    <ligand>
        <name>CDP</name>
        <dbReference type="ChEBI" id="CHEBI:58069"/>
    </ligand>
</feature>
<feature type="binding site" evidence="2">
    <location>
        <position position="238"/>
    </location>
    <ligand>
        <name>AMP</name>
        <dbReference type="ChEBI" id="CHEBI:456215"/>
    </ligand>
</feature>
<feature type="binding site" evidence="2">
    <location>
        <position position="238"/>
    </location>
    <ligand>
        <name>ATP</name>
        <dbReference type="ChEBI" id="CHEBI:30616"/>
    </ligand>
</feature>
<feature type="binding site" evidence="2">
    <location>
        <position position="312"/>
    </location>
    <ligand>
        <name>AMP</name>
        <dbReference type="ChEBI" id="CHEBI:456215"/>
    </ligand>
</feature>
<feature type="binding site" evidence="2">
    <location>
        <position position="312"/>
    </location>
    <ligand>
        <name>ATP</name>
        <dbReference type="ChEBI" id="CHEBI:30616"/>
    </ligand>
</feature>
<feature type="binding site" evidence="1">
    <location>
        <position position="337"/>
    </location>
    <ligand>
        <name>CDP</name>
        <dbReference type="ChEBI" id="CHEBI:58069"/>
    </ligand>
</feature>
<feature type="binding site" evidence="1">
    <location>
        <position position="339"/>
    </location>
    <ligand>
        <name>CDP</name>
        <dbReference type="ChEBI" id="CHEBI:58069"/>
    </ligand>
</feature>
<feature type="binding site" evidence="1">
    <location>
        <position position="342"/>
    </location>
    <ligand>
        <name>ADP</name>
        <dbReference type="ChEBI" id="CHEBI:456216"/>
    </ligand>
</feature>
<feature type="binding site" evidence="1">
    <location>
        <position position="342"/>
    </location>
    <ligand>
        <name>CDP</name>
        <dbReference type="ChEBI" id="CHEBI:58069"/>
    </ligand>
</feature>
<feature type="binding site" evidence="2">
    <location>
        <position position="343"/>
    </location>
    <ligand>
        <name>AMP</name>
        <dbReference type="ChEBI" id="CHEBI:456215"/>
    </ligand>
</feature>
<feature type="binding site" evidence="2">
    <location>
        <position position="343"/>
    </location>
    <ligand>
        <name>ATP</name>
        <dbReference type="ChEBI" id="CHEBI:30616"/>
    </ligand>
</feature>
<feature type="binding site" evidence="2">
    <location>
        <position position="374"/>
    </location>
    <ligand>
        <name>ATP</name>
        <dbReference type="ChEBI" id="CHEBI:30616"/>
    </ligand>
</feature>
<feature type="binding site" evidence="2">
    <location>
        <position position="374"/>
    </location>
    <ligand>
        <name>Mg(2+)</name>
        <dbReference type="ChEBI" id="CHEBI:18420"/>
    </ligand>
</feature>
<feature type="binding site" evidence="2">
    <location>
        <position position="375"/>
    </location>
    <ligand>
        <name>ATP</name>
        <dbReference type="ChEBI" id="CHEBI:30616"/>
    </ligand>
</feature>
<evidence type="ECO:0000250" key="1">
    <source>
        <dbReference type="UniProtKB" id="P00558"/>
    </source>
</evidence>
<evidence type="ECO:0000250" key="2">
    <source>
        <dbReference type="UniProtKB" id="Q7SIB7"/>
    </source>
</evidence>
<evidence type="ECO:0000305" key="3"/>
<comment type="catalytic activity">
    <reaction evidence="1">
        <text>(2R)-3-phosphoglycerate + ATP = (2R)-3-phospho-glyceroyl phosphate + ADP</text>
        <dbReference type="Rhea" id="RHEA:14801"/>
        <dbReference type="ChEBI" id="CHEBI:30616"/>
        <dbReference type="ChEBI" id="CHEBI:57604"/>
        <dbReference type="ChEBI" id="CHEBI:58272"/>
        <dbReference type="ChEBI" id="CHEBI:456216"/>
        <dbReference type="EC" id="2.7.2.3"/>
    </reaction>
</comment>
<comment type="cofactor">
    <cofactor evidence="1">
        <name>Mg(2+)</name>
        <dbReference type="ChEBI" id="CHEBI:18420"/>
    </cofactor>
</comment>
<comment type="pathway">
    <text>Carbohydrate degradation; glycolysis; pyruvate from D-glyceraldehyde 3-phosphate: step 2/5.</text>
</comment>
<comment type="subunit">
    <text>Monomer.</text>
</comment>
<comment type="subcellular location">
    <subcellularLocation>
        <location>Cytoplasm</location>
    </subcellularLocation>
</comment>
<comment type="similarity">
    <text evidence="3">Belongs to the phosphoglycerate kinase family.</text>
</comment>
<dbReference type="EC" id="2.7.2.3" evidence="1"/>
<dbReference type="EMBL" id="FO080917">
    <property type="protein sequence ID" value="CCD67788.1"/>
    <property type="molecule type" value="Genomic_DNA"/>
</dbReference>
<dbReference type="PIR" id="T29198">
    <property type="entry name" value="T29198"/>
</dbReference>
<dbReference type="RefSeq" id="NP_491245.1">
    <property type="nucleotide sequence ID" value="NM_058844.8"/>
</dbReference>
<dbReference type="SMR" id="P91427"/>
<dbReference type="BioGRID" id="37439">
    <property type="interactions" value="21"/>
</dbReference>
<dbReference type="FunCoup" id="P91427">
    <property type="interactions" value="793"/>
</dbReference>
<dbReference type="IntAct" id="P91427">
    <property type="interactions" value="1"/>
</dbReference>
<dbReference type="MINT" id="P91427"/>
<dbReference type="STRING" id="6239.T03F1.3.1"/>
<dbReference type="iPTMnet" id="P91427"/>
<dbReference type="PaxDb" id="6239-T03F1.3"/>
<dbReference type="PeptideAtlas" id="P91427"/>
<dbReference type="EnsemblMetazoa" id="T03F1.3.1">
    <property type="protein sequence ID" value="T03F1.3.1"/>
    <property type="gene ID" value="WBGene00020185"/>
</dbReference>
<dbReference type="GeneID" id="171965"/>
<dbReference type="KEGG" id="cel:CELE_T03F1.3"/>
<dbReference type="UCSC" id="T03F1.3">
    <property type="organism name" value="c. elegans"/>
</dbReference>
<dbReference type="AGR" id="WB:WBGene00020185"/>
<dbReference type="CTD" id="171965"/>
<dbReference type="WormBase" id="T03F1.3">
    <property type="protein sequence ID" value="CE13100"/>
    <property type="gene ID" value="WBGene00020185"/>
    <property type="gene designation" value="pgk-1"/>
</dbReference>
<dbReference type="eggNOG" id="KOG1367">
    <property type="taxonomic scope" value="Eukaryota"/>
</dbReference>
<dbReference type="GeneTree" id="ENSGT00390000008820"/>
<dbReference type="HOGENOM" id="CLU_025427_0_0_1"/>
<dbReference type="InParanoid" id="P91427"/>
<dbReference type="OMA" id="DMIFDIG"/>
<dbReference type="OrthoDB" id="275353at2759"/>
<dbReference type="PhylomeDB" id="P91427"/>
<dbReference type="Reactome" id="R-CEL-70171">
    <property type="pathway name" value="Glycolysis"/>
</dbReference>
<dbReference type="Reactome" id="R-CEL-70263">
    <property type="pathway name" value="Gluconeogenesis"/>
</dbReference>
<dbReference type="UniPathway" id="UPA00109">
    <property type="reaction ID" value="UER00185"/>
</dbReference>
<dbReference type="PRO" id="PR:P91427"/>
<dbReference type="Proteomes" id="UP000001940">
    <property type="component" value="Chromosome I"/>
</dbReference>
<dbReference type="Bgee" id="WBGene00020185">
    <property type="expression patterns" value="Expressed in germ line (C elegans) and 4 other cell types or tissues"/>
</dbReference>
<dbReference type="GO" id="GO:0005829">
    <property type="term" value="C:cytosol"/>
    <property type="evidence" value="ECO:0000318"/>
    <property type="project" value="GO_Central"/>
</dbReference>
<dbReference type="GO" id="GO:0043531">
    <property type="term" value="F:ADP binding"/>
    <property type="evidence" value="ECO:0000318"/>
    <property type="project" value="GO_Central"/>
</dbReference>
<dbReference type="GO" id="GO:0005524">
    <property type="term" value="F:ATP binding"/>
    <property type="evidence" value="ECO:0000250"/>
    <property type="project" value="UniProtKB"/>
</dbReference>
<dbReference type="GO" id="GO:0046872">
    <property type="term" value="F:metal ion binding"/>
    <property type="evidence" value="ECO:0007669"/>
    <property type="project" value="UniProtKB-KW"/>
</dbReference>
<dbReference type="GO" id="GO:0004618">
    <property type="term" value="F:phosphoglycerate kinase activity"/>
    <property type="evidence" value="ECO:0000250"/>
    <property type="project" value="UniProtKB"/>
</dbReference>
<dbReference type="GO" id="GO:0006094">
    <property type="term" value="P:gluconeogenesis"/>
    <property type="evidence" value="ECO:0000318"/>
    <property type="project" value="GO_Central"/>
</dbReference>
<dbReference type="GO" id="GO:0006096">
    <property type="term" value="P:glycolytic process"/>
    <property type="evidence" value="ECO:0000318"/>
    <property type="project" value="GO_Central"/>
</dbReference>
<dbReference type="CDD" id="cd00318">
    <property type="entry name" value="Phosphoglycerate_kinase"/>
    <property type="match status" value="1"/>
</dbReference>
<dbReference type="FunFam" id="3.40.50.1260:FF:000005">
    <property type="entry name" value="Phosphoglycerate kinase"/>
    <property type="match status" value="1"/>
</dbReference>
<dbReference type="FunFam" id="3.40.50.1260:FF:000032">
    <property type="entry name" value="Phosphoglycerate kinase"/>
    <property type="match status" value="1"/>
</dbReference>
<dbReference type="FunFam" id="3.40.50.1260:FF:000031">
    <property type="entry name" value="Phosphoglycerate kinase 1"/>
    <property type="match status" value="1"/>
</dbReference>
<dbReference type="Gene3D" id="3.40.50.1260">
    <property type="entry name" value="Phosphoglycerate kinase, N-terminal domain"/>
    <property type="match status" value="3"/>
</dbReference>
<dbReference type="HAMAP" id="MF_00145">
    <property type="entry name" value="Phosphoglyc_kinase"/>
    <property type="match status" value="1"/>
</dbReference>
<dbReference type="InterPro" id="IPR001576">
    <property type="entry name" value="Phosphoglycerate_kinase"/>
</dbReference>
<dbReference type="InterPro" id="IPR015911">
    <property type="entry name" value="Phosphoglycerate_kinase_CS"/>
</dbReference>
<dbReference type="InterPro" id="IPR015824">
    <property type="entry name" value="Phosphoglycerate_kinase_N"/>
</dbReference>
<dbReference type="InterPro" id="IPR036043">
    <property type="entry name" value="Phosphoglycerate_kinase_sf"/>
</dbReference>
<dbReference type="PANTHER" id="PTHR11406">
    <property type="entry name" value="PHOSPHOGLYCERATE KINASE"/>
    <property type="match status" value="1"/>
</dbReference>
<dbReference type="PANTHER" id="PTHR11406:SF0">
    <property type="entry name" value="PHOSPHOGLYCERATE KINASE"/>
    <property type="match status" value="1"/>
</dbReference>
<dbReference type="Pfam" id="PF00162">
    <property type="entry name" value="PGK"/>
    <property type="match status" value="1"/>
</dbReference>
<dbReference type="PIRSF" id="PIRSF000724">
    <property type="entry name" value="Pgk"/>
    <property type="match status" value="1"/>
</dbReference>
<dbReference type="PRINTS" id="PR00477">
    <property type="entry name" value="PHGLYCKINASE"/>
</dbReference>
<dbReference type="SUPFAM" id="SSF53748">
    <property type="entry name" value="Phosphoglycerate kinase"/>
    <property type="match status" value="1"/>
</dbReference>
<dbReference type="PROSITE" id="PS00111">
    <property type="entry name" value="PGLYCERATE_KINASE"/>
    <property type="match status" value="1"/>
</dbReference>
<accession>P91427</accession>
<reference key="1">
    <citation type="journal article" date="1998" name="Science">
        <title>Genome sequence of the nematode C. elegans: a platform for investigating biology.</title>
        <authorList>
            <consortium name="The C. elegans sequencing consortium"/>
        </authorList>
    </citation>
    <scope>NUCLEOTIDE SEQUENCE [LARGE SCALE GENOMIC DNA]</scope>
    <source>
        <strain>Bristol N2</strain>
    </source>
</reference>
<organism>
    <name type="scientific">Caenorhabditis elegans</name>
    <dbReference type="NCBI Taxonomy" id="6239"/>
    <lineage>
        <taxon>Eukaryota</taxon>
        <taxon>Metazoa</taxon>
        <taxon>Ecdysozoa</taxon>
        <taxon>Nematoda</taxon>
        <taxon>Chromadorea</taxon>
        <taxon>Rhabditida</taxon>
        <taxon>Rhabditina</taxon>
        <taxon>Rhabditomorpha</taxon>
        <taxon>Rhabditoidea</taxon>
        <taxon>Rhabditidae</taxon>
        <taxon>Peloderinae</taxon>
        <taxon>Caenorhabditis</taxon>
    </lineage>
</organism>
<proteinExistence type="inferred from homology"/>
<sequence>MSSLNKLAIDQLNLAGKRVLIRVDFNVPLKDGKITNNQRIAAAVPTIQHALSNGAKSVVLMSHLGRPDGRRQDKYTLKPVAEELKALLKKDVLFLDDCVGSEVEAACADPAPGSVILLENLRYHLEEEGKGVDASGAKVKADSAAVKKFRESLTKLGDIYVNDAFGTAHRAHSSMVGVEHSQRASGFLLKNELSYFSKALDNPARPFLAILGGAKVADKIQLIKNLLDKVNEMIIGGGMAYTFLKVAQGVKIGNSLYDEEGAKIVNELLEAAKAKGVQIHLPVDFVIADKFAEDATSKTVTAEEGVPDGHMGLDVGPESSKIFAAAIQRAKTIVWNGPAGVFEFDKFATGTKSLMDEVVKATAAGAITIIGGGDTATAAKKYNTEDKVSHVSTGGGASLELLEGKVLPGVDALSPAQ</sequence>
<protein>
    <recommendedName>
        <fullName>Probable phosphoglycerate kinase</fullName>
        <ecNumber evidence="1">2.7.2.3</ecNumber>
    </recommendedName>
</protein>